<comment type="function">
    <text evidence="1">Responsible for synthesis of pseudouridine from uracil-13 in transfer RNAs.</text>
</comment>
<comment type="catalytic activity">
    <reaction evidence="1">
        <text>uridine(13) in tRNA = pseudouridine(13) in tRNA</text>
        <dbReference type="Rhea" id="RHEA:42540"/>
        <dbReference type="Rhea" id="RHEA-COMP:10105"/>
        <dbReference type="Rhea" id="RHEA-COMP:10106"/>
        <dbReference type="ChEBI" id="CHEBI:65314"/>
        <dbReference type="ChEBI" id="CHEBI:65315"/>
        <dbReference type="EC" id="5.4.99.27"/>
    </reaction>
</comment>
<comment type="similarity">
    <text evidence="1">Belongs to the pseudouridine synthase TruD family.</text>
</comment>
<keyword id="KW-0413">Isomerase</keyword>
<keyword id="KW-0819">tRNA processing</keyword>
<proteinExistence type="inferred from homology"/>
<name>TRUD_YERPP</name>
<dbReference type="EC" id="5.4.99.27" evidence="1"/>
<dbReference type="EMBL" id="CP000668">
    <property type="protein sequence ID" value="ABP41361.1"/>
    <property type="molecule type" value="Genomic_DNA"/>
</dbReference>
<dbReference type="RefSeq" id="WP_002209393.1">
    <property type="nucleotide sequence ID" value="NZ_CP009715.1"/>
</dbReference>
<dbReference type="SMR" id="A4TPZ9"/>
<dbReference type="GeneID" id="57975350"/>
<dbReference type="KEGG" id="ypp:YPDSF_3001"/>
<dbReference type="PATRIC" id="fig|386656.14.peg.1362"/>
<dbReference type="GO" id="GO:0005829">
    <property type="term" value="C:cytosol"/>
    <property type="evidence" value="ECO:0007669"/>
    <property type="project" value="TreeGrafter"/>
</dbReference>
<dbReference type="GO" id="GO:0003723">
    <property type="term" value="F:RNA binding"/>
    <property type="evidence" value="ECO:0007669"/>
    <property type="project" value="InterPro"/>
</dbReference>
<dbReference type="GO" id="GO:0160150">
    <property type="term" value="F:tRNA pseudouridine(13) synthase activity"/>
    <property type="evidence" value="ECO:0007669"/>
    <property type="project" value="UniProtKB-EC"/>
</dbReference>
<dbReference type="GO" id="GO:0031119">
    <property type="term" value="P:tRNA pseudouridine synthesis"/>
    <property type="evidence" value="ECO:0007669"/>
    <property type="project" value="UniProtKB-UniRule"/>
</dbReference>
<dbReference type="CDD" id="cd02575">
    <property type="entry name" value="PseudoU_synth_EcTruD"/>
    <property type="match status" value="1"/>
</dbReference>
<dbReference type="FunFam" id="3.30.2340.10:FF:000001">
    <property type="entry name" value="tRNA pseudouridine synthase D"/>
    <property type="match status" value="1"/>
</dbReference>
<dbReference type="FunFam" id="3.30.2350.20:FF:000001">
    <property type="entry name" value="tRNA pseudouridine synthase D"/>
    <property type="match status" value="1"/>
</dbReference>
<dbReference type="Gene3D" id="3.30.2350.20">
    <property type="entry name" value="TruD, catalytic domain"/>
    <property type="match status" value="1"/>
</dbReference>
<dbReference type="Gene3D" id="3.30.2340.10">
    <property type="entry name" value="TruD, insertion domain"/>
    <property type="match status" value="1"/>
</dbReference>
<dbReference type="HAMAP" id="MF_01082">
    <property type="entry name" value="TruD"/>
    <property type="match status" value="1"/>
</dbReference>
<dbReference type="InterPro" id="IPR020103">
    <property type="entry name" value="PsdUridine_synth_cat_dom_sf"/>
</dbReference>
<dbReference type="InterPro" id="IPR001656">
    <property type="entry name" value="PsdUridine_synth_TruD"/>
</dbReference>
<dbReference type="InterPro" id="IPR020119">
    <property type="entry name" value="PsdUridine_synth_TruD_CS"/>
</dbReference>
<dbReference type="InterPro" id="IPR011760">
    <property type="entry name" value="PsdUridine_synth_TruD_insert"/>
</dbReference>
<dbReference type="InterPro" id="IPR042214">
    <property type="entry name" value="TruD_catalytic"/>
</dbReference>
<dbReference type="InterPro" id="IPR043165">
    <property type="entry name" value="TruD_insert_sf"/>
</dbReference>
<dbReference type="InterPro" id="IPR050170">
    <property type="entry name" value="TruD_pseudoU_synthase"/>
</dbReference>
<dbReference type="NCBIfam" id="NF002155">
    <property type="entry name" value="PRK00984.1-4"/>
    <property type="match status" value="1"/>
</dbReference>
<dbReference type="NCBIfam" id="TIGR00094">
    <property type="entry name" value="tRNA_TruD_broad"/>
    <property type="match status" value="1"/>
</dbReference>
<dbReference type="PANTHER" id="PTHR47811">
    <property type="entry name" value="TRNA PSEUDOURIDINE SYNTHASE D"/>
    <property type="match status" value="1"/>
</dbReference>
<dbReference type="PANTHER" id="PTHR47811:SF1">
    <property type="entry name" value="TRNA PSEUDOURIDINE SYNTHASE D"/>
    <property type="match status" value="1"/>
</dbReference>
<dbReference type="Pfam" id="PF01142">
    <property type="entry name" value="TruD"/>
    <property type="match status" value="2"/>
</dbReference>
<dbReference type="SUPFAM" id="SSF55120">
    <property type="entry name" value="Pseudouridine synthase"/>
    <property type="match status" value="1"/>
</dbReference>
<dbReference type="PROSITE" id="PS50984">
    <property type="entry name" value="TRUD"/>
    <property type="match status" value="1"/>
</dbReference>
<dbReference type="PROSITE" id="PS01268">
    <property type="entry name" value="UPF0024"/>
    <property type="match status" value="1"/>
</dbReference>
<reference key="1">
    <citation type="submission" date="2007-02" db="EMBL/GenBank/DDBJ databases">
        <title>Complete sequence of chromosome of Yersinia pestis Pestoides F.</title>
        <authorList>
            <consortium name="US DOE Joint Genome Institute"/>
            <person name="Copeland A."/>
            <person name="Lucas S."/>
            <person name="Lapidus A."/>
            <person name="Barry K."/>
            <person name="Detter J.C."/>
            <person name="Glavina del Rio T."/>
            <person name="Hammon N."/>
            <person name="Israni S."/>
            <person name="Dalin E."/>
            <person name="Tice H."/>
            <person name="Pitluck S."/>
            <person name="Di Bartolo G."/>
            <person name="Chain P."/>
            <person name="Malfatti S."/>
            <person name="Shin M."/>
            <person name="Vergez L."/>
            <person name="Schmutz J."/>
            <person name="Larimer F."/>
            <person name="Land M."/>
            <person name="Hauser L."/>
            <person name="Worsham P."/>
            <person name="Chu M."/>
            <person name="Bearden S."/>
            <person name="Garcia E."/>
            <person name="Richardson P."/>
        </authorList>
    </citation>
    <scope>NUCLEOTIDE SEQUENCE [LARGE SCALE GENOMIC DNA]</scope>
    <source>
        <strain>Pestoides F</strain>
    </source>
</reference>
<sequence>MDMENLTWLHGKPTASGILKANPEDFVVVEDLGFEPDGEGEHLLVRIRKNGCNTQFVADYLARFAKLHPRLVSYAGLKDRHAVTEQWFCLHLPGKEAPDLATFELEGCEVLEAVRHKRKLRIGSLKGNAFTLVLRHITDRQDVEQRLQQIAAQGVPNYFGSQRFGRGGNNLVQARLWANNEIRVKERSKRSFYLSASRSAMFNLISSYRLAQQLSTTVLEGDALQLSGRGSWFVAQADELAALQQRVTAGELNITAPLPGDSELGTHGEALAFEQACLAEQTELLSLIKRERVEGSRRAVLLKPQNMISNWWDDVTLELSFWLPAGSFATSVVREIMNQDRADDTDIIE</sequence>
<organism>
    <name type="scientific">Yersinia pestis (strain Pestoides F)</name>
    <dbReference type="NCBI Taxonomy" id="386656"/>
    <lineage>
        <taxon>Bacteria</taxon>
        <taxon>Pseudomonadati</taxon>
        <taxon>Pseudomonadota</taxon>
        <taxon>Gammaproteobacteria</taxon>
        <taxon>Enterobacterales</taxon>
        <taxon>Yersiniaceae</taxon>
        <taxon>Yersinia</taxon>
    </lineage>
</organism>
<gene>
    <name evidence="1" type="primary">truD</name>
    <name type="ordered locus">YPDSF_3001</name>
</gene>
<evidence type="ECO:0000255" key="1">
    <source>
        <dbReference type="HAMAP-Rule" id="MF_01082"/>
    </source>
</evidence>
<accession>A4TPZ9</accession>
<protein>
    <recommendedName>
        <fullName evidence="1">tRNA pseudouridine synthase D</fullName>
        <ecNumber evidence="1">5.4.99.27</ecNumber>
    </recommendedName>
    <alternativeName>
        <fullName evidence="1">tRNA pseudouridine(13) synthase</fullName>
    </alternativeName>
    <alternativeName>
        <fullName evidence="1">tRNA pseudouridylate synthase D</fullName>
    </alternativeName>
    <alternativeName>
        <fullName evidence="1">tRNA-uridine isomerase D</fullName>
    </alternativeName>
</protein>
<feature type="chain" id="PRO_1000084773" description="tRNA pseudouridine synthase D">
    <location>
        <begin position="1"/>
        <end position="349"/>
    </location>
</feature>
<feature type="domain" description="TRUD" evidence="1">
    <location>
        <begin position="154"/>
        <end position="302"/>
    </location>
</feature>
<feature type="active site" description="Nucleophile" evidence="1">
    <location>
        <position position="79"/>
    </location>
</feature>
<feature type="binding site" evidence="1">
    <location>
        <position position="26"/>
    </location>
    <ligand>
        <name>substrate</name>
    </ligand>
</feature>
<feature type="binding site" evidence="1">
    <location>
        <position position="128"/>
    </location>
    <ligand>
        <name>substrate</name>
    </ligand>
</feature>
<feature type="binding site" evidence="1">
    <location>
        <position position="328"/>
    </location>
    <ligand>
        <name>substrate</name>
    </ligand>
</feature>